<keyword id="KW-0227">DNA damage</keyword>
<keyword id="KW-0233">DNA recombination</keyword>
<keyword id="KW-0234">DNA repair</keyword>
<keyword id="KW-0238">DNA-binding</keyword>
<keyword id="KW-0539">Nucleus</keyword>
<keyword id="KW-1185">Reference proteome</keyword>
<keyword id="KW-0346">Stress response</keyword>
<organism>
    <name type="scientific">Pyricularia oryzae (strain 70-15 / ATCC MYA-4617 / FGSC 8958)</name>
    <name type="common">Rice blast fungus</name>
    <name type="synonym">Magnaporthe oryzae</name>
    <dbReference type="NCBI Taxonomy" id="242507"/>
    <lineage>
        <taxon>Eukaryota</taxon>
        <taxon>Fungi</taxon>
        <taxon>Dikarya</taxon>
        <taxon>Ascomycota</taxon>
        <taxon>Pezizomycotina</taxon>
        <taxon>Sordariomycetes</taxon>
        <taxon>Sordariomycetidae</taxon>
        <taxon>Magnaporthales</taxon>
        <taxon>Pyriculariaceae</taxon>
        <taxon>Pyricularia</taxon>
    </lineage>
</organism>
<name>RAD52_PYRO7</name>
<accession>Q8NK72</accession>
<accession>A4QYI8</accession>
<accession>G4N668</accession>
<dbReference type="EMBL" id="AB091332">
    <property type="protein sequence ID" value="BAC11860.1"/>
    <property type="molecule type" value="Genomic_DNA"/>
</dbReference>
<dbReference type="EMBL" id="CM001234">
    <property type="protein sequence ID" value="EHA49792.1"/>
    <property type="molecule type" value="Genomic_DNA"/>
</dbReference>
<dbReference type="RefSeq" id="XP_003716111.1">
    <property type="nucleotide sequence ID" value="XM_003716063.1"/>
</dbReference>
<dbReference type="SMR" id="Q8NK72"/>
<dbReference type="STRING" id="242507.Q8NK72"/>
<dbReference type="EnsemblFungi" id="MGG_08585T0">
    <property type="protein sequence ID" value="MGG_08585T0"/>
    <property type="gene ID" value="MGG_08585"/>
</dbReference>
<dbReference type="GeneID" id="2678699"/>
<dbReference type="KEGG" id="mgr:MGG_08585"/>
<dbReference type="VEuPathDB" id="FungiDB:MGG_08585"/>
<dbReference type="eggNOG" id="KOG4141">
    <property type="taxonomic scope" value="Eukaryota"/>
</dbReference>
<dbReference type="HOGENOM" id="CLU_011431_4_0_1"/>
<dbReference type="InParanoid" id="Q8NK72"/>
<dbReference type="OMA" id="NLHRHAD"/>
<dbReference type="OrthoDB" id="206565at2759"/>
<dbReference type="Proteomes" id="UP000009058">
    <property type="component" value="Chromosome 4"/>
</dbReference>
<dbReference type="GO" id="GO:0005634">
    <property type="term" value="C:nucleus"/>
    <property type="evidence" value="ECO:0007669"/>
    <property type="project" value="UniProtKB-SubCell"/>
</dbReference>
<dbReference type="GO" id="GO:0003677">
    <property type="term" value="F:DNA binding"/>
    <property type="evidence" value="ECO:0007669"/>
    <property type="project" value="UniProtKB-KW"/>
</dbReference>
<dbReference type="GO" id="GO:0000730">
    <property type="term" value="P:DNA recombinase assembly"/>
    <property type="evidence" value="ECO:0007669"/>
    <property type="project" value="InterPro"/>
</dbReference>
<dbReference type="GO" id="GO:0045002">
    <property type="term" value="P:double-strand break repair via single-strand annealing"/>
    <property type="evidence" value="ECO:0007669"/>
    <property type="project" value="InterPro"/>
</dbReference>
<dbReference type="GO" id="GO:0006312">
    <property type="term" value="P:mitotic recombination"/>
    <property type="evidence" value="ECO:0007669"/>
    <property type="project" value="TreeGrafter"/>
</dbReference>
<dbReference type="FunFam" id="3.30.390.80:FF:000001">
    <property type="entry name" value="DNA repair protein RAD52 homolog"/>
    <property type="match status" value="1"/>
</dbReference>
<dbReference type="Gene3D" id="3.30.390.80">
    <property type="entry name" value="DNA repair protein Rad52/59/22"/>
    <property type="match status" value="1"/>
</dbReference>
<dbReference type="InterPro" id="IPR004585">
    <property type="entry name" value="DNA_recomb/repair_Rad52"/>
</dbReference>
<dbReference type="InterPro" id="IPR041247">
    <property type="entry name" value="Rad52_fam"/>
</dbReference>
<dbReference type="InterPro" id="IPR007232">
    <property type="entry name" value="Rad52_Rad59_Rad22"/>
</dbReference>
<dbReference type="InterPro" id="IPR042525">
    <property type="entry name" value="Rad52_Rad59_Rad22_sf"/>
</dbReference>
<dbReference type="NCBIfam" id="TIGR00607">
    <property type="entry name" value="rad52"/>
    <property type="match status" value="1"/>
</dbReference>
<dbReference type="PANTHER" id="PTHR12132">
    <property type="entry name" value="DNA REPAIR AND RECOMBINATION PROTEIN RAD52, RAD59"/>
    <property type="match status" value="1"/>
</dbReference>
<dbReference type="PANTHER" id="PTHR12132:SF1">
    <property type="entry name" value="DNA REPAIR PROTEIN RAD52 HOMOLOG"/>
    <property type="match status" value="1"/>
</dbReference>
<dbReference type="Pfam" id="PF04098">
    <property type="entry name" value="Rad52_Rad22"/>
    <property type="match status" value="1"/>
</dbReference>
<dbReference type="SUPFAM" id="SSF54768">
    <property type="entry name" value="dsRNA-binding domain-like"/>
    <property type="match status" value="1"/>
</dbReference>
<proteinExistence type="evidence at transcript level"/>
<comment type="function">
    <text evidence="1 3">Involved in DNA double-strand break (DSB) repair and recombination. Promotes the annealing of complementary single-stranded DNA and by stimulation of the RAD51 recombinase (By similarity).</text>
</comment>
<comment type="subunit">
    <text evidence="1">Part of a complex that includes RAD51, RAD52 and RAD59.</text>
</comment>
<comment type="subcellular location">
    <subcellularLocation>
        <location evidence="1">Nucleus</location>
    </subcellularLocation>
</comment>
<comment type="induction">
    <text evidence="3">In response to MMS and UV treatment, and in response to heat shock and oxidative stress.</text>
</comment>
<comment type="similarity">
    <text evidence="4">Belongs to the RAD52 family.</text>
</comment>
<sequence>MPAPGDQHSRISNPFEDVKPRVSEYTAQEIATLQTRLERQLGPEYLSARAGPSGQKVHYVAAEKVIGLANEVFGFNGWSSSIQNIQVDFVDEHPQTLKISLGLHVVVRVTLRDGTFHEDIGYGHIENCKGKAMAFEKAKKEGTTDALKRALRNFGNVLGNCVYDKAYLAKVTKLKVEPTKFDELNLHRHADFAKKDVVAEPRLPPVKPEPSNTASAAPHPPLPPLPEADSFDDLLGEFDEADFCVVDADGHPDEVVLPENSHASGSSGNTGASTTNRGPGAPSGNQSNQQRPMQPSSRMNLNGPAGRPQPQTPNHQINRSGPQNGSINNQQNNHGMRPSPHMANQGRPPPPPQNNNNTSNGTGPHQRPLGNGPQQNTPPPNNGAATAPSGAEPVAFFSARAVARVPDDASLPPPPGTATPTALFNPKAESPSIRKTPGIDHSSSRPVSRTGQHVPAKPVQDGGGLANDNPSNNAGNGVQNQPQKPQPSQQRGSILNPQFDQSRRIGAPGGAASPLSNRNQYRPPTMMKRPPLADVPNGTSNGNGTPGDSKRMKLN</sequence>
<evidence type="ECO:0000250" key="1"/>
<evidence type="ECO:0000256" key="2">
    <source>
        <dbReference type="SAM" id="MobiDB-lite"/>
    </source>
</evidence>
<evidence type="ECO:0000269" key="3">
    <source ref="1"/>
</evidence>
<evidence type="ECO:0000305" key="4"/>
<protein>
    <recommendedName>
        <fullName>DNA repair and recombination protein rhm52</fullName>
    </recommendedName>
    <alternativeName>
        <fullName>RAD52 homolog</fullName>
    </alternativeName>
</protein>
<reference key="1">
    <citation type="journal article" date="2006" name="J. Gen. Plant Pathol.">
        <title>Oxidative stress induces high transcription of Rmh52 and Rhm54, novel genes identified as being involved in recombinational repair in Magnaporthe grisea.</title>
        <authorList>
            <person name="Elegado E.B."/>
            <person name="Iwasaki A."/>
            <person name="Sales M.A."/>
            <person name="Ishii C."/>
            <person name="Tomita F."/>
            <person name="Sone T."/>
        </authorList>
    </citation>
    <scope>NUCLEOTIDE SEQUENCE [GENOMIC DNA / MRNA]</scope>
    <scope>INDUCTION</scope>
    <scope>FUNCTION</scope>
    <source>
        <strain>Ina168</strain>
    </source>
</reference>
<reference key="2">
    <citation type="journal article" date="2005" name="Nature">
        <title>The genome sequence of the rice blast fungus Magnaporthe grisea.</title>
        <authorList>
            <person name="Dean R.A."/>
            <person name="Talbot N.J."/>
            <person name="Ebbole D.J."/>
            <person name="Farman M.L."/>
            <person name="Mitchell T.K."/>
            <person name="Orbach M.J."/>
            <person name="Thon M.R."/>
            <person name="Kulkarni R."/>
            <person name="Xu J.-R."/>
            <person name="Pan H."/>
            <person name="Read N.D."/>
            <person name="Lee Y.-H."/>
            <person name="Carbone I."/>
            <person name="Brown D."/>
            <person name="Oh Y.Y."/>
            <person name="Donofrio N."/>
            <person name="Jeong J.S."/>
            <person name="Soanes D.M."/>
            <person name="Djonovic S."/>
            <person name="Kolomiets E."/>
            <person name="Rehmeyer C."/>
            <person name="Li W."/>
            <person name="Harding M."/>
            <person name="Kim S."/>
            <person name="Lebrun M.-H."/>
            <person name="Bohnert H."/>
            <person name="Coughlan S."/>
            <person name="Butler J."/>
            <person name="Calvo S.E."/>
            <person name="Ma L.-J."/>
            <person name="Nicol R."/>
            <person name="Purcell S."/>
            <person name="Nusbaum C."/>
            <person name="Galagan J.E."/>
            <person name="Birren B.W."/>
        </authorList>
    </citation>
    <scope>NUCLEOTIDE SEQUENCE [LARGE SCALE GENOMIC DNA]</scope>
    <source>
        <strain>70-15 / ATCC MYA-4617 / FGSC 8958</strain>
    </source>
</reference>
<gene>
    <name type="primary">RHM52</name>
    <name type="ORF">MGG_08585</name>
</gene>
<feature type="chain" id="PRO_0000173889" description="DNA repair and recombination protein rhm52">
    <location>
        <begin position="1"/>
        <end position="555"/>
    </location>
</feature>
<feature type="DNA-binding region" evidence="1">
    <location>
        <begin position="148"/>
        <end position="152"/>
    </location>
</feature>
<feature type="region of interest" description="Disordered" evidence="2">
    <location>
        <begin position="197"/>
        <end position="232"/>
    </location>
</feature>
<feature type="region of interest" description="Disordered" evidence="2">
    <location>
        <begin position="251"/>
        <end position="555"/>
    </location>
</feature>
<feature type="compositionally biased region" description="Low complexity" evidence="2">
    <location>
        <begin position="260"/>
        <end position="276"/>
    </location>
</feature>
<feature type="compositionally biased region" description="Polar residues" evidence="2">
    <location>
        <begin position="283"/>
        <end position="300"/>
    </location>
</feature>
<feature type="compositionally biased region" description="Polar residues" evidence="2">
    <location>
        <begin position="312"/>
        <end position="334"/>
    </location>
</feature>
<feature type="compositionally biased region" description="Low complexity" evidence="2">
    <location>
        <begin position="354"/>
        <end position="375"/>
    </location>
</feature>
<feature type="compositionally biased region" description="Low complexity" evidence="2">
    <location>
        <begin position="382"/>
        <end position="404"/>
    </location>
</feature>
<feature type="compositionally biased region" description="Polar residues" evidence="2">
    <location>
        <begin position="468"/>
        <end position="478"/>
    </location>
</feature>
<feature type="compositionally biased region" description="Low complexity" evidence="2">
    <location>
        <begin position="479"/>
        <end position="490"/>
    </location>
</feature>
<feature type="compositionally biased region" description="Polar residues" evidence="2">
    <location>
        <begin position="491"/>
        <end position="500"/>
    </location>
</feature>
<feature type="compositionally biased region" description="Low complexity" evidence="2">
    <location>
        <begin position="536"/>
        <end position="547"/>
    </location>
</feature>